<evidence type="ECO:0000250" key="1"/>
<evidence type="ECO:0000256" key="2">
    <source>
        <dbReference type="SAM" id="MobiDB-lite"/>
    </source>
</evidence>
<evidence type="ECO:0000269" key="3">
    <source>
    </source>
</evidence>
<evidence type="ECO:0000305" key="4"/>
<name>DOP1_EMENI</name>
<protein>
    <recommendedName>
        <fullName>Protein dop1</fullName>
    </recommendedName>
</protein>
<keyword id="KW-0333">Golgi apparatus</keyword>
<keyword id="KW-0472">Membrane</keyword>
<keyword id="KW-0653">Protein transport</keyword>
<keyword id="KW-1185">Reference proteome</keyword>
<keyword id="KW-0677">Repeat</keyword>
<keyword id="KW-0813">Transport</keyword>
<proteinExistence type="evidence at protein level"/>
<organism>
    <name type="scientific">Emericella nidulans (strain FGSC A4 / ATCC 38163 / CBS 112.46 / NRRL 194 / M139)</name>
    <name type="common">Aspergillus nidulans</name>
    <dbReference type="NCBI Taxonomy" id="227321"/>
    <lineage>
        <taxon>Eukaryota</taxon>
        <taxon>Fungi</taxon>
        <taxon>Dikarya</taxon>
        <taxon>Ascomycota</taxon>
        <taxon>Pezizomycotina</taxon>
        <taxon>Eurotiomycetes</taxon>
        <taxon>Eurotiomycetidae</taxon>
        <taxon>Eurotiales</taxon>
        <taxon>Aspergillaceae</taxon>
        <taxon>Aspergillus</taxon>
        <taxon>Aspergillus subgen. Nidulantes</taxon>
    </lineage>
</organism>
<gene>
    <name type="primary">dop1</name>
    <name type="ORF">AN2094</name>
</gene>
<reference key="1">
    <citation type="journal article" date="2000" name="Mol. Microbiol.">
        <title>Morphogenesis in Aspergillus nidulans requires Dopey (DopA), a member of a novel family of leucine zipper-like proteins conserved from yeast to humans.</title>
        <authorList>
            <person name="Pascon R.C."/>
            <person name="Miller B.L."/>
        </authorList>
    </citation>
    <scope>NUCLEOTIDE SEQUENCE [MRNA]</scope>
    <scope>FUNCTION</scope>
    <scope>DOMAINS</scope>
    <scope>MUTAGENESIS OF ILE-1695</scope>
    <source>
        <strain>FGSC A4 / ATCC 38163 / CBS 112.46 / NRRL 194 / M139</strain>
    </source>
</reference>
<reference key="2">
    <citation type="journal article" date="2005" name="Nature">
        <title>Sequencing of Aspergillus nidulans and comparative analysis with A. fumigatus and A. oryzae.</title>
        <authorList>
            <person name="Galagan J.E."/>
            <person name="Calvo S.E."/>
            <person name="Cuomo C."/>
            <person name="Ma L.-J."/>
            <person name="Wortman J.R."/>
            <person name="Batzoglou S."/>
            <person name="Lee S.-I."/>
            <person name="Bastuerkmen M."/>
            <person name="Spevak C.C."/>
            <person name="Clutterbuck J."/>
            <person name="Kapitonov V."/>
            <person name="Jurka J."/>
            <person name="Scazzocchio C."/>
            <person name="Farman M.L."/>
            <person name="Butler J."/>
            <person name="Purcell S."/>
            <person name="Harris S."/>
            <person name="Braus G.H."/>
            <person name="Draht O."/>
            <person name="Busch S."/>
            <person name="D'Enfert C."/>
            <person name="Bouchier C."/>
            <person name="Goldman G.H."/>
            <person name="Bell-Pedersen D."/>
            <person name="Griffiths-Jones S."/>
            <person name="Doonan J.H."/>
            <person name="Yu J."/>
            <person name="Vienken K."/>
            <person name="Pain A."/>
            <person name="Freitag M."/>
            <person name="Selker E.U."/>
            <person name="Archer D.B."/>
            <person name="Penalva M.A."/>
            <person name="Oakley B.R."/>
            <person name="Momany M."/>
            <person name="Tanaka T."/>
            <person name="Kumagai T."/>
            <person name="Asai K."/>
            <person name="Machida M."/>
            <person name="Nierman W.C."/>
            <person name="Denning D.W."/>
            <person name="Caddick M.X."/>
            <person name="Hynes M."/>
            <person name="Paoletti M."/>
            <person name="Fischer R."/>
            <person name="Miller B.L."/>
            <person name="Dyer P.S."/>
            <person name="Sachs M.S."/>
            <person name="Osmani S.A."/>
            <person name="Birren B.W."/>
        </authorList>
    </citation>
    <scope>NUCLEOTIDE SEQUENCE [LARGE SCALE GENOMIC DNA]</scope>
    <source>
        <strain>FGSC A4 / ATCC 38163 / CBS 112.46 / NRRL 194 / M139</strain>
    </source>
</reference>
<reference key="3">
    <citation type="journal article" date="2009" name="Fungal Genet. Biol.">
        <title>The 2008 update of the Aspergillus nidulans genome annotation: a community effort.</title>
        <authorList>
            <person name="Wortman J.R."/>
            <person name="Gilsenan J.M."/>
            <person name="Joardar V."/>
            <person name="Deegan J."/>
            <person name="Clutterbuck J."/>
            <person name="Andersen M.R."/>
            <person name="Archer D."/>
            <person name="Bencina M."/>
            <person name="Braus G."/>
            <person name="Coutinho P."/>
            <person name="von Dohren H."/>
            <person name="Doonan J."/>
            <person name="Driessen A.J."/>
            <person name="Durek P."/>
            <person name="Espeso E."/>
            <person name="Fekete E."/>
            <person name="Flipphi M."/>
            <person name="Estrada C.G."/>
            <person name="Geysens S."/>
            <person name="Goldman G."/>
            <person name="de Groot P.W."/>
            <person name="Hansen K."/>
            <person name="Harris S.D."/>
            <person name="Heinekamp T."/>
            <person name="Helmstaedt K."/>
            <person name="Henrissat B."/>
            <person name="Hofmann G."/>
            <person name="Homan T."/>
            <person name="Horio T."/>
            <person name="Horiuchi H."/>
            <person name="James S."/>
            <person name="Jones M."/>
            <person name="Karaffa L."/>
            <person name="Karanyi Z."/>
            <person name="Kato M."/>
            <person name="Keller N."/>
            <person name="Kelly D.E."/>
            <person name="Kiel J.A."/>
            <person name="Kim J.M."/>
            <person name="van der Klei I.J."/>
            <person name="Klis F.M."/>
            <person name="Kovalchuk A."/>
            <person name="Krasevec N."/>
            <person name="Kubicek C.P."/>
            <person name="Liu B."/>
            <person name="Maccabe A."/>
            <person name="Meyer V."/>
            <person name="Mirabito P."/>
            <person name="Miskei M."/>
            <person name="Mos M."/>
            <person name="Mullins J."/>
            <person name="Nelson D.R."/>
            <person name="Nielsen J."/>
            <person name="Oakley B.R."/>
            <person name="Osmani S.A."/>
            <person name="Pakula T."/>
            <person name="Paszewski A."/>
            <person name="Paulsen I."/>
            <person name="Pilsyk S."/>
            <person name="Pocsi I."/>
            <person name="Punt P.J."/>
            <person name="Ram A.F."/>
            <person name="Ren Q."/>
            <person name="Robellet X."/>
            <person name="Robson G."/>
            <person name="Seiboth B."/>
            <person name="van Solingen P."/>
            <person name="Specht T."/>
            <person name="Sun J."/>
            <person name="Taheri-Talesh N."/>
            <person name="Takeshita N."/>
            <person name="Ussery D."/>
            <person name="vanKuyk P.A."/>
            <person name="Visser H."/>
            <person name="van de Vondervoort P.J."/>
            <person name="de Vries R.P."/>
            <person name="Walton J."/>
            <person name="Xiang X."/>
            <person name="Xiong Y."/>
            <person name="Zeng A.P."/>
            <person name="Brandt B.W."/>
            <person name="Cornell M.J."/>
            <person name="van den Hondel C.A."/>
            <person name="Visser J."/>
            <person name="Oliver S.G."/>
            <person name="Turner G."/>
        </authorList>
    </citation>
    <scope>GENOME REANNOTATION</scope>
    <source>
        <strain>FGSC A4 / ATCC 38163 / CBS 112.46 / NRRL 194 / M139</strain>
    </source>
</reference>
<feature type="chain" id="PRO_0000190975" description="Protein dop1">
    <location>
        <begin position="1"/>
        <end position="1858"/>
    </location>
</feature>
<feature type="region of interest" description="Disordered" evidence="2">
    <location>
        <begin position="1"/>
        <end position="33"/>
    </location>
</feature>
<feature type="region of interest" description="Disordered" evidence="2">
    <location>
        <begin position="1052"/>
        <end position="1092"/>
    </location>
</feature>
<feature type="region of interest" description="Transactivation">
    <location>
        <begin position="1838"/>
        <end position="1854"/>
    </location>
</feature>
<feature type="compositionally biased region" description="Low complexity" evidence="2">
    <location>
        <begin position="1"/>
        <end position="23"/>
    </location>
</feature>
<feature type="compositionally biased region" description="Polar residues" evidence="2">
    <location>
        <begin position="1070"/>
        <end position="1079"/>
    </location>
</feature>
<feature type="mutagenesis site" description="Inactivated function at 42 degrees Celsius. Altered cellular morphology and cell pattern formation." evidence="3">
    <original>I</original>
    <variation>R</variation>
    <location>
        <position position="1695"/>
    </location>
</feature>
<sequence length="1858" mass="207245">MSLDPSSFPRSNSPASSDSSLTRSRLRGKEGSLKKDKNYRRYASSVERALSLFDNTLQEWADYISFLSRLLKALQTHPPDQPVVPHKVLVAKRLSQSMNPSLPSGVHQKALEVYTYIFNLIKPEGLSHDLPLYYPGIAPTLTFASLTVRPLFLSLVETYVCDLEPWAIRPALKAIILSLLPGLEEETSDDFDSTLRLLNTLREIASRMDTQRPGAETNSSGQYFWQCFFLASITSPSRRLGILAYLNRYLPKLGVTDRRPSRHEEVDATAMPLEMQVAVDSVILPEPGLLIRCFATGLTDEQVLVQRNFLDLLVTHLPLSSPILQTRITKDDLQRLIVAAAGVVSRRDMSLNRRLWAWLLGPDPVGDRASFEARPSISSTASKTAAESEELSQSQYFSRFGLQPLASGLLQLLKRDTELPSEKAKPFRITLSLMDRWEVGGHVVPAVFLPFMRSVKAYKLAAPKAHFDEVFRSATSFFDGVESGMIFSELLNLIDWDAKSLANDAPRILDNLNLAHFILDHFNVREEDMVLNHAPLLTLAALIKMSELSSEATTSVAHDQLQAVSNGLSKVVTLLTGLLIDRAFLRKSDSKNSVNEPSMLLDRPGSAILRQIHQFYDRSRNSLDLQPPPFPPTDLADLIIKNVYEQAISAVNACNDAKSIPERLNLLIVVLKKLPRSRILRDKRLYVAIGKHIQASTVELSTASFSHLSSMSTTITSLYCIHKLGYYITYEEVSDLIPPLVRQLWQFLSPLSPKFHVEAVRCLWNLHSVSWSDHLVESTITSLMFTPPAPGSYQLSSEEEAGRYFILWNHSHHGTYELPPKNLQDSAQSQASYHSSMLERPLFTVLDLLSQGSTQPAQVVQLWLQDLPSVAKVFRIIISKLEGVLHRGNQLGTFEGNTVVSPDDYAECNYLFETIHNVLGALNHNGWVSLLTQTMAHNSRRHDASASEDNAEAPSLHSVVFQASLKIVSGYKSGTATANAEEVKLQQISLLVMRQLLLGPGVEELVESGIDSLLVDRLYSMLDEGGDIAIQAALIDTLLAVLKARFSQAYLPPPPTKPKHQRGGSREKLTSPSLLSFTSDKPEKSSVLLPSPEPPQRLLDCLLKGLSSPRSRAIIDKWIMLLCEILPIYSTCIFQILLTLVDCLGREIRQSYTNLQSAFEKTEGWPKDRPEQTTISLLTGFETCIAAAHERLLMEEVNAPAAKSPDQTHGFFGNMVSGVFASDSNHPRSAAMNNRLTVLLSFQDAVRLCFSIWSWGAAERSSLPQDTESIASFQYTSLRMRNRSRRILEHLFTAEALECLETMVDMWIKSDRDTSPLIFNLLHTLDGSRPKIAIPAIFNAIYTRTNPAALDPSRKSTMTTALTETELAGFLVTYARSLDDDVLDEIWIDCTTFLRDVLSNPFPHRQILPRLVEFAAILGVKLENTNFGEDRRMRKELGDVILRLLTAIFTSKPMGFTQEQGLLGRASLDYDSSSIQRIGPDDMLSILVASMPAFSMTLGDMDRITTAVSNISTNIIGPFIRARLFPNNLNTSFMALMQHISKIPQVAKVWKKDVADAFNDPRFFGSQLDLVKGGWMTLLRQWALVDKDRLSEIMTRLTPPATAGIMFGVGASAARLDADRKAQLNLRRISLLVLSTAEDYFIAEMPALLQKLEDLLGATASSSPSSATRAEIFMVLRALILKSTTTTLSPFWPLINSELQEAISAISSGNQQELYNPYSLLQACKLLDTLLVLAPDDFQLLEWLYVTDTVDAIYPPEQFEPTALADEVSHNLGVRWSTSSDPTRESTNLHHGVRYPGLAADWIRETAKDEIVDRVLRPFFDQLSIHAFESTYSISNPNLEACRDDLLADLFNESTMAN</sequence>
<dbReference type="EMBL" id="AF134206">
    <property type="protein sequence ID" value="AAD28280.1"/>
    <property type="molecule type" value="mRNA"/>
</dbReference>
<dbReference type="EMBL" id="AACD01000032">
    <property type="protein sequence ID" value="EAA64926.1"/>
    <property type="molecule type" value="Genomic_DNA"/>
</dbReference>
<dbReference type="EMBL" id="BN001307">
    <property type="protein sequence ID" value="CBF86166.1"/>
    <property type="molecule type" value="Genomic_DNA"/>
</dbReference>
<dbReference type="RefSeq" id="XP_659698.1">
    <property type="nucleotide sequence ID" value="XM_654606.1"/>
</dbReference>
<dbReference type="FunCoup" id="Q9Y7B3">
    <property type="interactions" value="119"/>
</dbReference>
<dbReference type="STRING" id="227321.Q9Y7B3"/>
<dbReference type="EnsemblFungi" id="CBF86166">
    <property type="protein sequence ID" value="CBF86166"/>
    <property type="gene ID" value="ANIA_02094"/>
</dbReference>
<dbReference type="KEGG" id="ani:ANIA_02094"/>
<dbReference type="VEuPathDB" id="FungiDB:AN2094"/>
<dbReference type="eggNOG" id="KOG3613">
    <property type="taxonomic scope" value="Eukaryota"/>
</dbReference>
<dbReference type="HOGENOM" id="CLU_001197_1_0_1"/>
<dbReference type="InParanoid" id="Q9Y7B3"/>
<dbReference type="OMA" id="GLETCIA"/>
<dbReference type="OrthoDB" id="297643at2759"/>
<dbReference type="Proteomes" id="UP000000560">
    <property type="component" value="Chromosome VII"/>
</dbReference>
<dbReference type="GO" id="GO:0005829">
    <property type="term" value="C:cytosol"/>
    <property type="evidence" value="ECO:0007669"/>
    <property type="project" value="GOC"/>
</dbReference>
<dbReference type="GO" id="GO:0005768">
    <property type="term" value="C:endosome"/>
    <property type="evidence" value="ECO:0000318"/>
    <property type="project" value="GO_Central"/>
</dbReference>
<dbReference type="GO" id="GO:0000139">
    <property type="term" value="C:Golgi membrane"/>
    <property type="evidence" value="ECO:0007669"/>
    <property type="project" value="UniProtKB-SubCell"/>
</dbReference>
<dbReference type="GO" id="GO:0005802">
    <property type="term" value="C:trans-Golgi network"/>
    <property type="evidence" value="ECO:0000318"/>
    <property type="project" value="GO_Central"/>
</dbReference>
<dbReference type="GO" id="GO:0000902">
    <property type="term" value="P:cell morphogenesis"/>
    <property type="evidence" value="ECO:0000315"/>
    <property type="project" value="AspGD"/>
</dbReference>
<dbReference type="GO" id="GO:0070791">
    <property type="term" value="P:cleistothecium development"/>
    <property type="evidence" value="ECO:0000315"/>
    <property type="project" value="AspGD"/>
</dbReference>
<dbReference type="GO" id="GO:0048315">
    <property type="term" value="P:conidium formation"/>
    <property type="evidence" value="ECO:0000315"/>
    <property type="project" value="AspGD"/>
</dbReference>
<dbReference type="GO" id="GO:0006895">
    <property type="term" value="P:Golgi to endosome transport"/>
    <property type="evidence" value="ECO:0007669"/>
    <property type="project" value="InterPro"/>
</dbReference>
<dbReference type="GO" id="GO:0070798">
    <property type="term" value="P:positive regulation of cleistothecium development"/>
    <property type="evidence" value="ECO:0000315"/>
    <property type="project" value="AspGD"/>
</dbReference>
<dbReference type="GO" id="GO:0075307">
    <property type="term" value="P:positive regulation of conidium formation"/>
    <property type="evidence" value="ECO:0000315"/>
    <property type="project" value="AspGD"/>
</dbReference>
<dbReference type="GO" id="GO:0015031">
    <property type="term" value="P:protein transport"/>
    <property type="evidence" value="ECO:0007669"/>
    <property type="project" value="UniProtKB-KW"/>
</dbReference>
<dbReference type="InterPro" id="IPR016024">
    <property type="entry name" value="ARM-type_fold"/>
</dbReference>
<dbReference type="InterPro" id="IPR040314">
    <property type="entry name" value="DOP1"/>
</dbReference>
<dbReference type="InterPro" id="IPR056457">
    <property type="entry name" value="DOP1_C"/>
</dbReference>
<dbReference type="InterPro" id="IPR007249">
    <property type="entry name" value="DOP1_N"/>
</dbReference>
<dbReference type="InterPro" id="IPR056458">
    <property type="entry name" value="TPR_DOP1_M"/>
</dbReference>
<dbReference type="PANTHER" id="PTHR14042">
    <property type="entry name" value="DOPEY-RELATED"/>
    <property type="match status" value="1"/>
</dbReference>
<dbReference type="PANTHER" id="PTHR14042:SF24">
    <property type="entry name" value="PROTEIN DOPEY-1 HOMOLOG"/>
    <property type="match status" value="1"/>
</dbReference>
<dbReference type="Pfam" id="PF24598">
    <property type="entry name" value="DOP1_C"/>
    <property type="match status" value="1"/>
</dbReference>
<dbReference type="Pfam" id="PF04118">
    <property type="entry name" value="Dopey_N"/>
    <property type="match status" value="1"/>
</dbReference>
<dbReference type="Pfam" id="PF24597">
    <property type="entry name" value="TPR_DOP1_M"/>
    <property type="match status" value="1"/>
</dbReference>
<dbReference type="SUPFAM" id="SSF48371">
    <property type="entry name" value="ARM repeat"/>
    <property type="match status" value="1"/>
</dbReference>
<comment type="function">
    <text evidence="1 3">Involved in cellular morphogenesis. Required for traffic between late Golgi and early endosomes, and for the normal structure and organization of the endoplasmic reticulum (By similarity). During the vegetative phase, contributes to the highly polarized hyphal growth. Required for the reproductive cycle. Involved in conidiophore initiation and differentiation. May have a role in controlling the balance between vegetative proliferation and developmental morphogenesis.</text>
</comment>
<comment type="subcellular location">
    <subcellularLocation>
        <location evidence="1">Golgi apparatus membrane</location>
        <topology evidence="1">Peripheral membrane protein</topology>
    </subcellularLocation>
    <text evidence="1">Late Golgi.</text>
</comment>
<comment type="similarity">
    <text evidence="4">Belongs to the DOP1 family.</text>
</comment>
<accession>Q9Y7B3</accession>
<accession>C8VLX2</accession>
<accession>Q5BBI6</accession>